<reference key="1">
    <citation type="submission" date="2009-01" db="EMBL/GenBank/DDBJ databases">
        <title>Complete sequence of Diaphorobacter sp. TPSY.</title>
        <authorList>
            <consortium name="US DOE Joint Genome Institute"/>
            <person name="Lucas S."/>
            <person name="Copeland A."/>
            <person name="Lapidus A."/>
            <person name="Glavina del Rio T."/>
            <person name="Tice H."/>
            <person name="Bruce D."/>
            <person name="Goodwin L."/>
            <person name="Pitluck S."/>
            <person name="Chertkov O."/>
            <person name="Brettin T."/>
            <person name="Detter J.C."/>
            <person name="Han C."/>
            <person name="Larimer F."/>
            <person name="Land M."/>
            <person name="Hauser L."/>
            <person name="Kyrpides N."/>
            <person name="Mikhailova N."/>
            <person name="Coates J.D."/>
        </authorList>
    </citation>
    <scope>NUCLEOTIDE SEQUENCE [LARGE SCALE GENOMIC DNA]</scope>
    <source>
        <strain>TPSY</strain>
    </source>
</reference>
<gene>
    <name evidence="1" type="primary">secB</name>
    <name type="ordered locus">Dtpsy_2825</name>
</gene>
<evidence type="ECO:0000255" key="1">
    <source>
        <dbReference type="HAMAP-Rule" id="MF_00821"/>
    </source>
</evidence>
<sequence>MAEETPVFQIQRVYLKDLSLEQPNSPAILLEQEQPSVDIQLGVEATPVVEGIFEVAVTATVQTKIKDKTVFLVEAKQAGIFEIRNVPEDQMGAIIGIACPQIIYPYLRGNVADTVTRAGFPPVHLAEINFQAMYEQQQAAAAEAATSTAQ</sequence>
<proteinExistence type="inferred from homology"/>
<keyword id="KW-0143">Chaperone</keyword>
<keyword id="KW-0963">Cytoplasm</keyword>
<keyword id="KW-0653">Protein transport</keyword>
<keyword id="KW-1185">Reference proteome</keyword>
<keyword id="KW-0811">Translocation</keyword>
<keyword id="KW-0813">Transport</keyword>
<organism>
    <name type="scientific">Acidovorax ebreus (strain TPSY)</name>
    <name type="common">Diaphorobacter sp. (strain TPSY)</name>
    <dbReference type="NCBI Taxonomy" id="535289"/>
    <lineage>
        <taxon>Bacteria</taxon>
        <taxon>Pseudomonadati</taxon>
        <taxon>Pseudomonadota</taxon>
        <taxon>Betaproteobacteria</taxon>
        <taxon>Burkholderiales</taxon>
        <taxon>Comamonadaceae</taxon>
        <taxon>Diaphorobacter</taxon>
    </lineage>
</organism>
<comment type="function">
    <text evidence="1">One of the proteins required for the normal export of preproteins out of the cell cytoplasm. It is a molecular chaperone that binds to a subset of precursor proteins, maintaining them in a translocation-competent state. It also specifically binds to its receptor SecA.</text>
</comment>
<comment type="subunit">
    <text evidence="1">Homotetramer, a dimer of dimers. One homotetramer interacts with 1 SecA dimer.</text>
</comment>
<comment type="subcellular location">
    <subcellularLocation>
        <location evidence="1">Cytoplasm</location>
    </subcellularLocation>
</comment>
<comment type="similarity">
    <text evidence="1">Belongs to the SecB family.</text>
</comment>
<protein>
    <recommendedName>
        <fullName evidence="1">Protein-export protein SecB</fullName>
    </recommendedName>
</protein>
<name>SECB_ACIET</name>
<dbReference type="EMBL" id="CP001392">
    <property type="protein sequence ID" value="ACM34259.1"/>
    <property type="molecule type" value="Genomic_DNA"/>
</dbReference>
<dbReference type="RefSeq" id="WP_011806600.1">
    <property type="nucleotide sequence ID" value="NC_011992.1"/>
</dbReference>
<dbReference type="SMR" id="B9MEY9"/>
<dbReference type="GeneID" id="84684144"/>
<dbReference type="KEGG" id="dia:Dtpsy_2825"/>
<dbReference type="eggNOG" id="COG1952">
    <property type="taxonomic scope" value="Bacteria"/>
</dbReference>
<dbReference type="HOGENOM" id="CLU_111574_1_0_4"/>
<dbReference type="Proteomes" id="UP000000450">
    <property type="component" value="Chromosome"/>
</dbReference>
<dbReference type="GO" id="GO:0005737">
    <property type="term" value="C:cytoplasm"/>
    <property type="evidence" value="ECO:0007669"/>
    <property type="project" value="UniProtKB-SubCell"/>
</dbReference>
<dbReference type="GO" id="GO:0051082">
    <property type="term" value="F:unfolded protein binding"/>
    <property type="evidence" value="ECO:0007669"/>
    <property type="project" value="InterPro"/>
</dbReference>
<dbReference type="GO" id="GO:0006457">
    <property type="term" value="P:protein folding"/>
    <property type="evidence" value="ECO:0007669"/>
    <property type="project" value="UniProtKB-UniRule"/>
</dbReference>
<dbReference type="GO" id="GO:0051262">
    <property type="term" value="P:protein tetramerization"/>
    <property type="evidence" value="ECO:0007669"/>
    <property type="project" value="InterPro"/>
</dbReference>
<dbReference type="GO" id="GO:0015031">
    <property type="term" value="P:protein transport"/>
    <property type="evidence" value="ECO:0007669"/>
    <property type="project" value="UniProtKB-UniRule"/>
</dbReference>
<dbReference type="Gene3D" id="3.10.420.10">
    <property type="entry name" value="SecB-like"/>
    <property type="match status" value="1"/>
</dbReference>
<dbReference type="HAMAP" id="MF_00821">
    <property type="entry name" value="SecB"/>
    <property type="match status" value="1"/>
</dbReference>
<dbReference type="InterPro" id="IPR003708">
    <property type="entry name" value="SecB"/>
</dbReference>
<dbReference type="InterPro" id="IPR035958">
    <property type="entry name" value="SecB-like_sf"/>
</dbReference>
<dbReference type="NCBIfam" id="NF004394">
    <property type="entry name" value="PRK05751.1-5"/>
    <property type="match status" value="1"/>
</dbReference>
<dbReference type="NCBIfam" id="TIGR00809">
    <property type="entry name" value="secB"/>
    <property type="match status" value="1"/>
</dbReference>
<dbReference type="PANTHER" id="PTHR36918">
    <property type="match status" value="1"/>
</dbReference>
<dbReference type="PANTHER" id="PTHR36918:SF1">
    <property type="entry name" value="PROTEIN-EXPORT PROTEIN SECB"/>
    <property type="match status" value="1"/>
</dbReference>
<dbReference type="Pfam" id="PF02556">
    <property type="entry name" value="SecB"/>
    <property type="match status" value="1"/>
</dbReference>
<dbReference type="PRINTS" id="PR01594">
    <property type="entry name" value="SECBCHAPRONE"/>
</dbReference>
<dbReference type="SUPFAM" id="SSF54611">
    <property type="entry name" value="SecB-like"/>
    <property type="match status" value="1"/>
</dbReference>
<accession>B9MEY9</accession>
<feature type="chain" id="PRO_1000148700" description="Protein-export protein SecB">
    <location>
        <begin position="1"/>
        <end position="150"/>
    </location>
</feature>